<evidence type="ECO:0000255" key="1">
    <source>
        <dbReference type="HAMAP-Rule" id="MF_01569"/>
    </source>
</evidence>
<keyword id="KW-0030">Aminoacyl-tRNA synthetase</keyword>
<keyword id="KW-0067">ATP-binding</keyword>
<keyword id="KW-0963">Cytoplasm</keyword>
<keyword id="KW-0436">Ligase</keyword>
<keyword id="KW-0547">Nucleotide-binding</keyword>
<keyword id="KW-0648">Protein biosynthesis</keyword>
<keyword id="KW-1185">Reference proteome</keyword>
<reference key="1">
    <citation type="submission" date="2006-01" db="EMBL/GenBank/DDBJ databases">
        <title>Complete sequence of Anaeromyxobacter dehalogenans 2CP-C.</title>
        <authorList>
            <person name="Copeland A."/>
            <person name="Lucas S."/>
            <person name="Lapidus A."/>
            <person name="Barry K."/>
            <person name="Detter J.C."/>
            <person name="Glavina T."/>
            <person name="Hammon N."/>
            <person name="Israni S."/>
            <person name="Pitluck S."/>
            <person name="Brettin T."/>
            <person name="Bruce D."/>
            <person name="Han C."/>
            <person name="Tapia R."/>
            <person name="Gilna P."/>
            <person name="Kiss H."/>
            <person name="Schmutz J."/>
            <person name="Larimer F."/>
            <person name="Land M."/>
            <person name="Kyrpides N."/>
            <person name="Anderson I."/>
            <person name="Sanford R.A."/>
            <person name="Ritalahti K.M."/>
            <person name="Thomas H.S."/>
            <person name="Kirby J.R."/>
            <person name="Zhulin I.B."/>
            <person name="Loeffler F.E."/>
            <person name="Richardson P."/>
        </authorList>
    </citation>
    <scope>NUCLEOTIDE SEQUENCE [LARGE SCALE GENOMIC DNA]</scope>
    <source>
        <strain>2CP-C</strain>
    </source>
</reference>
<proteinExistence type="inferred from homology"/>
<protein>
    <recommendedName>
        <fullName evidence="1">Proline--tRNA ligase 1</fullName>
        <ecNumber evidence="1">6.1.1.15</ecNumber>
    </recommendedName>
    <alternativeName>
        <fullName evidence="1">Prolyl-tRNA synthetase 1</fullName>
        <shortName evidence="1">ProRS 1</shortName>
    </alternativeName>
</protein>
<comment type="function">
    <text evidence="1">Catalyzes the attachment of proline to tRNA(Pro) in a two-step reaction: proline is first activated by ATP to form Pro-AMP and then transferred to the acceptor end of tRNA(Pro). As ProRS can inadvertently accommodate and process non-cognate amino acids such as alanine and cysteine, to avoid such errors it has two additional distinct editing activities against alanine. One activity is designated as 'pretransfer' editing and involves the tRNA(Pro)-independent hydrolysis of activated Ala-AMP. The other activity is designated 'posttransfer' editing and involves deacylation of mischarged Ala-tRNA(Pro). The misacylated Cys-tRNA(Pro) is not edited by ProRS.</text>
</comment>
<comment type="catalytic activity">
    <reaction evidence="1">
        <text>tRNA(Pro) + L-proline + ATP = L-prolyl-tRNA(Pro) + AMP + diphosphate</text>
        <dbReference type="Rhea" id="RHEA:14305"/>
        <dbReference type="Rhea" id="RHEA-COMP:9700"/>
        <dbReference type="Rhea" id="RHEA-COMP:9702"/>
        <dbReference type="ChEBI" id="CHEBI:30616"/>
        <dbReference type="ChEBI" id="CHEBI:33019"/>
        <dbReference type="ChEBI" id="CHEBI:60039"/>
        <dbReference type="ChEBI" id="CHEBI:78442"/>
        <dbReference type="ChEBI" id="CHEBI:78532"/>
        <dbReference type="ChEBI" id="CHEBI:456215"/>
        <dbReference type="EC" id="6.1.1.15"/>
    </reaction>
</comment>
<comment type="subunit">
    <text evidence="1">Homodimer.</text>
</comment>
<comment type="subcellular location">
    <subcellularLocation>
        <location evidence="1">Cytoplasm</location>
    </subcellularLocation>
</comment>
<comment type="domain">
    <text evidence="1">Consists of three domains: the N-terminal catalytic domain, the editing domain and the C-terminal anticodon-binding domain.</text>
</comment>
<comment type="similarity">
    <text evidence="1">Belongs to the class-II aminoacyl-tRNA synthetase family. ProS type 1 subfamily.</text>
</comment>
<accession>Q2IGK6</accession>
<sequence>MHAVRYTQAFIPTLKEAPADAQVASHKLLVRAGFIRQLGAGIYDYLPLAKRSLTKIEAIVREEMNAIGGQEFFLPALHPAEIWKESGRWEVMGDNMFRLKDRKGGDYGLGMTHEEIFTAIARDELRSYRQLPQVWYQIQTKFRDEPRPKSGLLRVRQFTMKDAYSFDVDRAGLDKSYEDQRQAYEKIFTRCGLDFVAVQAHSGSMGGSESSEFMVRTDAGEDLVAACPRCRYAANTETATSRVAAEADGPGLAAPEKFPTPGVVTIEALEQAPHSVPARRQLKTLVYMADERPVIAVVRGDQELNEAKLQTATGAQVVRPAHAEEIPPLMGAHAGSLGAVRFTRARVVVDPSLADRKDMVTGANEDGFHLRGVDVRRDLLAHGATLAELRTVKAGEGCPRCDGALEVFKALEVGHIFKLGTKYSESMKATVLDAGGKQVPIVMGSYGIGVERILAAAIELHHDDNGIVFPMAIAPFHATVLTLGPEPELRKAAEEVVAALGKEGVEVLFDDRDERAGVKFKDADLLGIPIRVAVGKKGLAAGNVEWKLRRGGAVELVPLGEVARKAAEAVRAATT</sequence>
<name>SYP1_ANADE</name>
<feature type="chain" id="PRO_0000248640" description="Proline--tRNA ligase 1">
    <location>
        <begin position="1"/>
        <end position="575"/>
    </location>
</feature>
<dbReference type="EC" id="6.1.1.15" evidence="1"/>
<dbReference type="EMBL" id="CP000251">
    <property type="protein sequence ID" value="ABC83711.1"/>
    <property type="molecule type" value="Genomic_DNA"/>
</dbReference>
<dbReference type="RefSeq" id="WP_011422993.1">
    <property type="nucleotide sequence ID" value="NC_007760.1"/>
</dbReference>
<dbReference type="SMR" id="Q2IGK6"/>
<dbReference type="STRING" id="290397.Adeh_3947"/>
<dbReference type="KEGG" id="ade:Adeh_3947"/>
<dbReference type="eggNOG" id="COG0442">
    <property type="taxonomic scope" value="Bacteria"/>
</dbReference>
<dbReference type="HOGENOM" id="CLU_016739_0_0_7"/>
<dbReference type="OrthoDB" id="9809052at2"/>
<dbReference type="Proteomes" id="UP000001935">
    <property type="component" value="Chromosome"/>
</dbReference>
<dbReference type="GO" id="GO:0005829">
    <property type="term" value="C:cytosol"/>
    <property type="evidence" value="ECO:0007669"/>
    <property type="project" value="TreeGrafter"/>
</dbReference>
<dbReference type="GO" id="GO:0002161">
    <property type="term" value="F:aminoacyl-tRNA deacylase activity"/>
    <property type="evidence" value="ECO:0007669"/>
    <property type="project" value="InterPro"/>
</dbReference>
<dbReference type="GO" id="GO:0005524">
    <property type="term" value="F:ATP binding"/>
    <property type="evidence" value="ECO:0007669"/>
    <property type="project" value="UniProtKB-UniRule"/>
</dbReference>
<dbReference type="GO" id="GO:0004827">
    <property type="term" value="F:proline-tRNA ligase activity"/>
    <property type="evidence" value="ECO:0007669"/>
    <property type="project" value="UniProtKB-UniRule"/>
</dbReference>
<dbReference type="GO" id="GO:0006433">
    <property type="term" value="P:prolyl-tRNA aminoacylation"/>
    <property type="evidence" value="ECO:0007669"/>
    <property type="project" value="UniProtKB-UniRule"/>
</dbReference>
<dbReference type="CDD" id="cd04334">
    <property type="entry name" value="ProRS-INS"/>
    <property type="match status" value="1"/>
</dbReference>
<dbReference type="CDD" id="cd00861">
    <property type="entry name" value="ProRS_anticodon_short"/>
    <property type="match status" value="1"/>
</dbReference>
<dbReference type="CDD" id="cd00779">
    <property type="entry name" value="ProRS_core_prok"/>
    <property type="match status" value="1"/>
</dbReference>
<dbReference type="Gene3D" id="3.40.50.800">
    <property type="entry name" value="Anticodon-binding domain"/>
    <property type="match status" value="1"/>
</dbReference>
<dbReference type="Gene3D" id="3.30.930.10">
    <property type="entry name" value="Bira Bifunctional Protein, Domain 2"/>
    <property type="match status" value="2"/>
</dbReference>
<dbReference type="Gene3D" id="3.90.960.10">
    <property type="entry name" value="YbaK/aminoacyl-tRNA synthetase-associated domain"/>
    <property type="match status" value="1"/>
</dbReference>
<dbReference type="HAMAP" id="MF_01569">
    <property type="entry name" value="Pro_tRNA_synth_type1"/>
    <property type="match status" value="1"/>
</dbReference>
<dbReference type="InterPro" id="IPR002314">
    <property type="entry name" value="aa-tRNA-synt_IIb"/>
</dbReference>
<dbReference type="InterPro" id="IPR006195">
    <property type="entry name" value="aa-tRNA-synth_II"/>
</dbReference>
<dbReference type="InterPro" id="IPR045864">
    <property type="entry name" value="aa-tRNA-synth_II/BPL/LPL"/>
</dbReference>
<dbReference type="InterPro" id="IPR004154">
    <property type="entry name" value="Anticodon-bd"/>
</dbReference>
<dbReference type="InterPro" id="IPR036621">
    <property type="entry name" value="Anticodon-bd_dom_sf"/>
</dbReference>
<dbReference type="InterPro" id="IPR002316">
    <property type="entry name" value="Pro-tRNA-ligase_IIa"/>
</dbReference>
<dbReference type="InterPro" id="IPR004500">
    <property type="entry name" value="Pro-tRNA-synth_IIa_bac-type"/>
</dbReference>
<dbReference type="InterPro" id="IPR023717">
    <property type="entry name" value="Pro-tRNA-Synthase_IIa_type1"/>
</dbReference>
<dbReference type="InterPro" id="IPR050062">
    <property type="entry name" value="Pro-tRNA_synthetase"/>
</dbReference>
<dbReference type="InterPro" id="IPR044140">
    <property type="entry name" value="ProRS_anticodon_short"/>
</dbReference>
<dbReference type="InterPro" id="IPR033730">
    <property type="entry name" value="ProRS_core_prok"/>
</dbReference>
<dbReference type="InterPro" id="IPR036754">
    <property type="entry name" value="YbaK/aa-tRNA-synt-asso_dom_sf"/>
</dbReference>
<dbReference type="InterPro" id="IPR007214">
    <property type="entry name" value="YbaK/aa-tRNA-synth-assoc-dom"/>
</dbReference>
<dbReference type="NCBIfam" id="NF006625">
    <property type="entry name" value="PRK09194.1"/>
    <property type="match status" value="1"/>
</dbReference>
<dbReference type="NCBIfam" id="TIGR00409">
    <property type="entry name" value="proS_fam_II"/>
    <property type="match status" value="1"/>
</dbReference>
<dbReference type="PANTHER" id="PTHR42753">
    <property type="entry name" value="MITOCHONDRIAL RIBOSOME PROTEIN L39/PROLYL-TRNA LIGASE FAMILY MEMBER"/>
    <property type="match status" value="1"/>
</dbReference>
<dbReference type="PANTHER" id="PTHR42753:SF2">
    <property type="entry name" value="PROLINE--TRNA LIGASE"/>
    <property type="match status" value="1"/>
</dbReference>
<dbReference type="Pfam" id="PF03129">
    <property type="entry name" value="HGTP_anticodon"/>
    <property type="match status" value="1"/>
</dbReference>
<dbReference type="Pfam" id="PF00587">
    <property type="entry name" value="tRNA-synt_2b"/>
    <property type="match status" value="1"/>
</dbReference>
<dbReference type="Pfam" id="PF04073">
    <property type="entry name" value="tRNA_edit"/>
    <property type="match status" value="1"/>
</dbReference>
<dbReference type="PRINTS" id="PR01046">
    <property type="entry name" value="TRNASYNTHPRO"/>
</dbReference>
<dbReference type="SUPFAM" id="SSF52954">
    <property type="entry name" value="Class II aaRS ABD-related"/>
    <property type="match status" value="1"/>
</dbReference>
<dbReference type="SUPFAM" id="SSF55681">
    <property type="entry name" value="Class II aaRS and biotin synthetases"/>
    <property type="match status" value="1"/>
</dbReference>
<dbReference type="SUPFAM" id="SSF55826">
    <property type="entry name" value="YbaK/ProRS associated domain"/>
    <property type="match status" value="1"/>
</dbReference>
<dbReference type="PROSITE" id="PS50862">
    <property type="entry name" value="AA_TRNA_LIGASE_II"/>
    <property type="match status" value="1"/>
</dbReference>
<gene>
    <name evidence="1" type="primary">proS1</name>
    <name type="ordered locus">Adeh_3947</name>
</gene>
<organism>
    <name type="scientific">Anaeromyxobacter dehalogenans (strain 2CP-C)</name>
    <dbReference type="NCBI Taxonomy" id="290397"/>
    <lineage>
        <taxon>Bacteria</taxon>
        <taxon>Pseudomonadati</taxon>
        <taxon>Myxococcota</taxon>
        <taxon>Myxococcia</taxon>
        <taxon>Myxococcales</taxon>
        <taxon>Cystobacterineae</taxon>
        <taxon>Anaeromyxobacteraceae</taxon>
        <taxon>Anaeromyxobacter</taxon>
    </lineage>
</organism>